<comment type="function">
    <text evidence="1 14">Acts as a RAC1 guanine nucleotide exchange factor (GEF) and can induce membrane ruffling. May function as a positive regulator of apoptosis. Functions in cell migration, attachment and cell spreading. Promotes targeting of RAC1 to focal adhesions. Downstream of NMDA receptors and CaMKK-CaMK1 signaling cascade, promotes the formation of spines and synapses in hippocampal neurons (By similarity).</text>
</comment>
<comment type="subunit">
    <text evidence="1 9 12 13 14 15">Interacts with PAK kinases through the SH3 domain. Interacts with unphosphorylated PAK1. Interacts with ITCH. Interacts with SCRIB; interaction is direct and may play a role in regulation of apoptosis (By similarity). Interacts with GIT1 and TGFB1I1. Interacts with FRMPD4 (via N-terminus). Interacts with CaMK1. Interacts with BIN2 (By similarity). Interacts with PTK2/FAK1 and RAC1. Interacts with PARVB. Interacts with YWHAZ (PubMed:16959763). Interacts (via PH domain) with NOX1 (via FAD-binding FR-type domain) (By similarity).</text>
</comment>
<comment type="interaction">
    <interactant intactId="EBI-642580">
        <id>Q9ES28</id>
    </interactant>
    <interactant intactId="EBI-645933">
        <id>Q68FF6</id>
        <label>Git1</label>
    </interactant>
    <organismsDiffer>false</organismsDiffer>
    <experiments>2</experiments>
</comment>
<comment type="interaction">
    <interactant intactId="EBI-642580">
        <id>Q9ES28</id>
    </interactant>
    <interactant intactId="EBI-642860">
        <id>Q9JLQ2</id>
        <label>Git2</label>
    </interactant>
    <organismsDiffer>false</organismsDiffer>
    <experiments>6</experiments>
</comment>
<comment type="interaction">
    <interactant intactId="EBI-642580">
        <id>Q9ES28</id>
    </interactant>
    <interactant intactId="EBI-6914996">
        <id>Q9ES46</id>
        <label>Parvb</label>
    </interactant>
    <organismsDiffer>false</organismsDiffer>
    <experiments>2</experiments>
</comment>
<comment type="interaction">
    <interactant intactId="EBI-642580">
        <id>Q9ES28</id>
    </interactant>
    <interactant intactId="EBI-3842379">
        <id>Q9Z272</id>
        <label>Git1</label>
    </interactant>
    <organismsDiffer>true</organismsDiffer>
    <experiments>2</experiments>
</comment>
<comment type="interaction">
    <interactant intactId="EBI-642580">
        <id>Q9ES28</id>
    </interactant>
    <interactant intactId="EBI-1046878">
        <id>Q14161</id>
        <label>GIT2</label>
    </interactant>
    <organismsDiffer>true</organismsDiffer>
    <experiments>2</experiments>
</comment>
<comment type="interaction">
    <interactant intactId="EBI-642580">
        <id>Q9ES28</id>
    </interactant>
    <interactant intactId="EBI-1047679">
        <id>Q9HBI1</id>
        <label>PARVB</label>
    </interactant>
    <organismsDiffer>true</organismsDiffer>
    <experiments>10</experiments>
</comment>
<comment type="interaction">
    <interactant intactId="EBI-642580">
        <id>Q9ES28</id>
    </interactant>
    <interactant intactId="EBI-36481413">
        <id>Q9QX74-4</id>
        <label>Shank2</label>
    </interactant>
    <organismsDiffer>true</organismsDiffer>
    <experiments>3</experiments>
</comment>
<comment type="interaction">
    <interactant intactId="EBI-8620514">
        <id>Q9ES28-2</id>
    </interactant>
    <interactant intactId="EBI-80909">
        <id>Q9WV48</id>
        <label>Shank1</label>
    </interactant>
    <organismsDiffer>true</organismsDiffer>
    <experiments>6</experiments>
</comment>
<comment type="interaction">
    <interactant intactId="EBI-8620514">
        <id>Q9ES28-2</id>
    </interactant>
    <interactant intactId="EBI-397902">
        <id>Q9QX74</id>
        <label>Shank2</label>
    </interactant>
    <organismsDiffer>true</organismsDiffer>
    <experiments>4</experiments>
</comment>
<comment type="interaction">
    <interactant intactId="EBI-8620514">
        <id>Q9ES28-2</id>
    </interactant>
    <interactant intactId="EBI-6271152">
        <id>Q9JLU4</id>
        <label>Shank3</label>
    </interactant>
    <organismsDiffer>true</organismsDiffer>
    <experiments>2</experiments>
</comment>
<comment type="subcellular location">
    <subcellularLocation>
        <location>Cell junction</location>
        <location>Focal adhesion</location>
    </subcellularLocation>
    <subcellularLocation>
        <location>Cell projection</location>
        <location>Ruffle</location>
    </subcellularLocation>
    <subcellularLocation>
        <location>Cytoplasm</location>
        <location>Cell cortex</location>
    </subcellularLocation>
    <subcellularLocation>
        <location>Cell projection</location>
        <location>Lamellipodium</location>
    </subcellularLocation>
    <text>Detected at cell adhesions. A small proportion is detected at focal adhesions.</text>
</comment>
<comment type="alternative products">
    <event type="alternative splicing"/>
    <event type="alternative initiation"/>
    <isoform>
        <id>Q9ES28-1</id>
        <name>B</name>
        <sequence type="displayed"/>
    </isoform>
    <isoform>
        <id>Q9ES28-2</id>
        <name>A</name>
        <sequence type="described" ref="VSP_001817"/>
    </isoform>
    <isoform>
        <id>Q9ES28-3</id>
        <name>C</name>
        <sequence type="described" ref="VSP_001816"/>
    </isoform>
    <isoform>
        <id>Q9ES28-4</id>
        <name>D</name>
        <sequence type="described" ref="VSP_023052 VSP_023053 VSP_001817"/>
    </isoform>
    <isoform>
        <id>Q9ES28-5</id>
        <name>E</name>
        <name>d</name>
        <sequence type="described" ref="VSP_023055 VSP_023057"/>
    </isoform>
    <isoform>
        <id>Q9ES28-6</id>
        <name>F</name>
        <sequence type="described" ref="VSP_023052 VSP_023053 VSP_023054 VSP_023056"/>
    </isoform>
    <isoform>
        <id>Q9ES28-7</id>
        <name>G</name>
        <name>b(L)</name>
        <sequence type="described" ref="VSP_023052 VSP_023053"/>
    </isoform>
    <isoform>
        <id>Q9ES28-8</id>
        <name>H</name>
        <name>b</name>
        <sequence type="described" ref="VSP_023051"/>
    </isoform>
</comment>
<comment type="tissue specificity">
    <text evidence="10 11">Seems to be expressed in the central nervous system. Isoform B, isoform C and isoform E are expressed with highest levels in brain and testis.</text>
</comment>
<comment type="PTM">
    <text evidence="1 14">Phosphorylated on Ser-673 by CaMK1; enhancement of GEF activity and downstream activation of RAC1 (By similarity). Phosphorylated by PTK2/FAK1; this promotes interaction with RAC1.</text>
</comment>
<comment type="miscellaneous">
    <molecule>Isoform H</molecule>
    <text evidence="23">Produced by alternative initiation at Met-158 of isoform G.</text>
</comment>
<comment type="sequence caution" evidence="23">
    <conflict type="erroneous initiation">
        <sequence resource="EMBL-CDS" id="AAB57691"/>
    </conflict>
    <text>Truncated N-terminus.</text>
</comment>
<comment type="sequence caution" evidence="23">
    <conflict type="erroneous initiation">
        <sequence resource="EMBL-CDS" id="AAG18017"/>
    </conflict>
    <text>Truncated N-terminus.</text>
</comment>
<comment type="sequence caution" evidence="23">
    <conflict type="erroneous initiation">
        <sequence resource="EMBL-CDS" id="AAG18018"/>
    </conflict>
    <text>Truncated N-terminus.</text>
</comment>
<comment type="sequence caution" evidence="23">
    <conflict type="erroneous initiation">
        <sequence resource="EMBL-CDS" id="AAH44838"/>
    </conflict>
    <text>Truncated N-terminus.</text>
</comment>
<comment type="sequence caution" evidence="23">
    <conflict type="erroneous initiation">
        <sequence resource="EMBL-CDS" id="AAK97363"/>
    </conflict>
    <text>Truncated N-terminus.</text>
</comment>
<comment type="sequence caution" evidence="23">
    <conflict type="erroneous initiation">
        <sequence resource="EMBL-CDS" id="BAC35033"/>
    </conflict>
    <text>Truncated N-terminus.</text>
</comment>
<comment type="sequence caution" evidence="23">
    <conflict type="erroneous initiation">
        <sequence resource="EMBL-CDS" id="BAC97874"/>
    </conflict>
    <text>Extended N-terminus.</text>
</comment>
<reference key="1">
    <citation type="journal article" date="2003" name="DNA Res.">
        <title>Prediction of the coding sequences of mouse homologues of KIAA gene: III. The complete nucleotide sequences of 500 mouse KIAA-homologous cDNAs identified by screening of terminal sequences of cDNA clones randomly sampled from size-fractionated libraries.</title>
        <authorList>
            <person name="Okazaki N."/>
            <person name="Kikuno R."/>
            <person name="Ohara R."/>
            <person name="Inamoto S."/>
            <person name="Koseki H."/>
            <person name="Hiraoka S."/>
            <person name="Saga Y."/>
            <person name="Nagase T."/>
            <person name="Ohara O."/>
            <person name="Koga H."/>
        </authorList>
    </citation>
    <scope>NUCLEOTIDE SEQUENCE [LARGE SCALE MRNA] (ISOFORM E)</scope>
    <source>
        <tissue>Brain</tissue>
    </source>
</reference>
<reference key="2">
    <citation type="journal article" date="2004" name="Biochem. Biophys. Res. Commun.">
        <title>betaPix-b(L), a novel isoform of betaPix, is generated by alternative translation.</title>
        <authorList>
            <person name="Rhee S."/>
            <person name="Yang S.J."/>
            <person name="Lee S.J."/>
            <person name="Park D."/>
        </authorList>
    </citation>
    <scope>NUCLEOTIDE SEQUENCE [MRNA] (ISOFORMS G AND H)</scope>
    <source>
        <strain>ICR</strain>
        <tissue>Brain</tissue>
    </source>
</reference>
<reference key="3">
    <citation type="journal article" date="2005" name="Science">
        <title>The transcriptional landscape of the mammalian genome.</title>
        <authorList>
            <person name="Carninci P."/>
            <person name="Kasukawa T."/>
            <person name="Katayama S."/>
            <person name="Gough J."/>
            <person name="Frith M.C."/>
            <person name="Maeda N."/>
            <person name="Oyama R."/>
            <person name="Ravasi T."/>
            <person name="Lenhard B."/>
            <person name="Wells C."/>
            <person name="Kodzius R."/>
            <person name="Shimokawa K."/>
            <person name="Bajic V.B."/>
            <person name="Brenner S.E."/>
            <person name="Batalov S."/>
            <person name="Forrest A.R."/>
            <person name="Zavolan M."/>
            <person name="Davis M.J."/>
            <person name="Wilming L.G."/>
            <person name="Aidinis V."/>
            <person name="Allen J.E."/>
            <person name="Ambesi-Impiombato A."/>
            <person name="Apweiler R."/>
            <person name="Aturaliya R.N."/>
            <person name="Bailey T.L."/>
            <person name="Bansal M."/>
            <person name="Baxter L."/>
            <person name="Beisel K.W."/>
            <person name="Bersano T."/>
            <person name="Bono H."/>
            <person name="Chalk A.M."/>
            <person name="Chiu K.P."/>
            <person name="Choudhary V."/>
            <person name="Christoffels A."/>
            <person name="Clutterbuck D.R."/>
            <person name="Crowe M.L."/>
            <person name="Dalla E."/>
            <person name="Dalrymple B.P."/>
            <person name="de Bono B."/>
            <person name="Della Gatta G."/>
            <person name="di Bernardo D."/>
            <person name="Down T."/>
            <person name="Engstrom P."/>
            <person name="Fagiolini M."/>
            <person name="Faulkner G."/>
            <person name="Fletcher C.F."/>
            <person name="Fukushima T."/>
            <person name="Furuno M."/>
            <person name="Futaki S."/>
            <person name="Gariboldi M."/>
            <person name="Georgii-Hemming P."/>
            <person name="Gingeras T.R."/>
            <person name="Gojobori T."/>
            <person name="Green R.E."/>
            <person name="Gustincich S."/>
            <person name="Harbers M."/>
            <person name="Hayashi Y."/>
            <person name="Hensch T.K."/>
            <person name="Hirokawa N."/>
            <person name="Hill D."/>
            <person name="Huminiecki L."/>
            <person name="Iacono M."/>
            <person name="Ikeo K."/>
            <person name="Iwama A."/>
            <person name="Ishikawa T."/>
            <person name="Jakt M."/>
            <person name="Kanapin A."/>
            <person name="Katoh M."/>
            <person name="Kawasawa Y."/>
            <person name="Kelso J."/>
            <person name="Kitamura H."/>
            <person name="Kitano H."/>
            <person name="Kollias G."/>
            <person name="Krishnan S.P."/>
            <person name="Kruger A."/>
            <person name="Kummerfeld S.K."/>
            <person name="Kurochkin I.V."/>
            <person name="Lareau L.F."/>
            <person name="Lazarevic D."/>
            <person name="Lipovich L."/>
            <person name="Liu J."/>
            <person name="Liuni S."/>
            <person name="McWilliam S."/>
            <person name="Madan Babu M."/>
            <person name="Madera M."/>
            <person name="Marchionni L."/>
            <person name="Matsuda H."/>
            <person name="Matsuzawa S."/>
            <person name="Miki H."/>
            <person name="Mignone F."/>
            <person name="Miyake S."/>
            <person name="Morris K."/>
            <person name="Mottagui-Tabar S."/>
            <person name="Mulder N."/>
            <person name="Nakano N."/>
            <person name="Nakauchi H."/>
            <person name="Ng P."/>
            <person name="Nilsson R."/>
            <person name="Nishiguchi S."/>
            <person name="Nishikawa S."/>
            <person name="Nori F."/>
            <person name="Ohara O."/>
            <person name="Okazaki Y."/>
            <person name="Orlando V."/>
            <person name="Pang K.C."/>
            <person name="Pavan W.J."/>
            <person name="Pavesi G."/>
            <person name="Pesole G."/>
            <person name="Petrovsky N."/>
            <person name="Piazza S."/>
            <person name="Reed J."/>
            <person name="Reid J.F."/>
            <person name="Ring B.Z."/>
            <person name="Ringwald M."/>
            <person name="Rost B."/>
            <person name="Ruan Y."/>
            <person name="Salzberg S.L."/>
            <person name="Sandelin A."/>
            <person name="Schneider C."/>
            <person name="Schoenbach C."/>
            <person name="Sekiguchi K."/>
            <person name="Semple C.A."/>
            <person name="Seno S."/>
            <person name="Sessa L."/>
            <person name="Sheng Y."/>
            <person name="Shibata Y."/>
            <person name="Shimada H."/>
            <person name="Shimada K."/>
            <person name="Silva D."/>
            <person name="Sinclair B."/>
            <person name="Sperling S."/>
            <person name="Stupka E."/>
            <person name="Sugiura K."/>
            <person name="Sultana R."/>
            <person name="Takenaka Y."/>
            <person name="Taki K."/>
            <person name="Tammoja K."/>
            <person name="Tan S.L."/>
            <person name="Tang S."/>
            <person name="Taylor M.S."/>
            <person name="Tegner J."/>
            <person name="Teichmann S.A."/>
            <person name="Ueda H.R."/>
            <person name="van Nimwegen E."/>
            <person name="Verardo R."/>
            <person name="Wei C.L."/>
            <person name="Yagi K."/>
            <person name="Yamanishi H."/>
            <person name="Zabarovsky E."/>
            <person name="Zhu S."/>
            <person name="Zimmer A."/>
            <person name="Hide W."/>
            <person name="Bult C."/>
            <person name="Grimmond S.M."/>
            <person name="Teasdale R.D."/>
            <person name="Liu E.T."/>
            <person name="Brusic V."/>
            <person name="Quackenbush J."/>
            <person name="Wahlestedt C."/>
            <person name="Mattick J.S."/>
            <person name="Hume D.A."/>
            <person name="Kai C."/>
            <person name="Sasaki D."/>
            <person name="Tomaru Y."/>
            <person name="Fukuda S."/>
            <person name="Kanamori-Katayama M."/>
            <person name="Suzuki M."/>
            <person name="Aoki J."/>
            <person name="Arakawa T."/>
            <person name="Iida J."/>
            <person name="Imamura K."/>
            <person name="Itoh M."/>
            <person name="Kato T."/>
            <person name="Kawaji H."/>
            <person name="Kawagashira N."/>
            <person name="Kawashima T."/>
            <person name="Kojima M."/>
            <person name="Kondo S."/>
            <person name="Konno H."/>
            <person name="Nakano K."/>
            <person name="Ninomiya N."/>
            <person name="Nishio T."/>
            <person name="Okada M."/>
            <person name="Plessy C."/>
            <person name="Shibata K."/>
            <person name="Shiraki T."/>
            <person name="Suzuki S."/>
            <person name="Tagami M."/>
            <person name="Waki K."/>
            <person name="Watahiki A."/>
            <person name="Okamura-Oho Y."/>
            <person name="Suzuki H."/>
            <person name="Kawai J."/>
            <person name="Hayashizaki Y."/>
        </authorList>
    </citation>
    <scope>NUCLEOTIDE SEQUENCE [LARGE SCALE MRNA] (ISOFORMS D AND F)</scope>
    <source>
        <strain>C57BL/6J</strain>
        <tissue>Cerebellum</tissue>
        <tissue>Lung</tissue>
    </source>
</reference>
<reference key="4">
    <citation type="journal article" date="2004" name="Genome Res.">
        <title>The status, quality, and expansion of the NIH full-length cDNA project: the Mammalian Gene Collection (MGC).</title>
        <authorList>
            <consortium name="The MGC Project Team"/>
        </authorList>
    </citation>
    <scope>NUCLEOTIDE SEQUENCE [LARGE SCALE MRNA] (ISOFORM D)</scope>
    <source>
        <strain>FVB/N</strain>
        <tissue>Mammary tumor</tissue>
    </source>
</reference>
<reference key="5">
    <citation type="journal article" date="2000" name="Biochem. Biophys. Res. Commun.">
        <title>Molecular cloning of neuronally expressed mouse betaPix isoforms.</title>
        <authorList>
            <person name="Kim S."/>
            <person name="Kim T."/>
            <person name="Lee D."/>
            <person name="Park S.-H."/>
            <person name="Kim H."/>
            <person name="Park D."/>
        </authorList>
    </citation>
    <scope>NUCLEOTIDE SEQUENCE [MRNA] OF 59-862 (ISOFORM B)</scope>
    <scope>NUCLEOTIDE SEQUENCE [MRNA] OF 150-862 (ISOFORM C)</scope>
    <scope>TISSUE SPECIFICITY</scope>
    <source>
        <strain>C57BL/6J</strain>
        <tissue>Brain</tissue>
    </source>
</reference>
<reference key="6">
    <citation type="journal article" date="2001" name="Mol. Cells">
        <title>Molecular cloning and characterization of a novel mouse betaPix isoform.</title>
        <authorList>
            <person name="Kim T."/>
            <person name="Park D."/>
        </authorList>
    </citation>
    <scope>NUCLEOTIDE SEQUENCE [MRNA] OF 63-862 (ISOFORM E)</scope>
    <scope>TISSUE SPECIFICITY</scope>
    <source>
        <strain>C57BL/6J</strain>
        <tissue>Brain</tissue>
    </source>
</reference>
<reference key="7">
    <citation type="journal article" date="1997" name="Biochem. Biophys. Res. Commun.">
        <title>Cloning of a SH3 domain-containing proline-rich protein, p85SPR, and its localization in focal adhesion.</title>
        <authorList>
            <person name="Oh W.K."/>
            <person name="Yoo J.C."/>
            <person name="Jo D."/>
            <person name="Song Y.H."/>
            <person name="Kim M.G."/>
            <person name="Park D."/>
        </authorList>
    </citation>
    <scope>NUCLEOTIDE SEQUENCE [MRNA] OF 126-862 (ISOFORM A)</scope>
    <source>
        <tissue>Thymus</tissue>
    </source>
</reference>
<reference key="8">
    <citation type="journal article" date="1999" name="J. Biol. Chem.">
        <title>A tyrosine-phosphorylated protein that binds to an important regulatory region on the cool family of p21-activated kinase-binding proteins.</title>
        <authorList>
            <person name="Bagrodia S."/>
            <person name="Bailey D."/>
            <person name="Lenard Z."/>
            <person name="Hart M."/>
            <person name="Guan J.L."/>
            <person name="Premont R.T."/>
            <person name="Taylor S.J."/>
            <person name="Cerione R.A."/>
        </authorList>
    </citation>
    <scope>INTERACTION WITH GIT1</scope>
</reference>
<reference key="9">
    <citation type="journal article" date="2002" name="J. Biochem.">
        <title>Hic-5 interacts with GIT1 with a different binding mode from paxillin.</title>
        <authorList>
            <person name="Nishiya N."/>
            <person name="Shirai T."/>
            <person name="Suzuki W."/>
            <person name="Nose K."/>
        </authorList>
    </citation>
    <scope>INTERACTION WITH GIT1 AND TGFB1I1</scope>
</reference>
<reference key="10">
    <citation type="journal article" date="2004" name="Mol. Cell. Proteomics">
        <title>Phosphoproteomic analysis of the developing mouse brain.</title>
        <authorList>
            <person name="Ballif B.A."/>
            <person name="Villen J."/>
            <person name="Beausoleil S.A."/>
            <person name="Schwartz D."/>
            <person name="Gygi S.P."/>
        </authorList>
    </citation>
    <scope>PHOSPHORYLATION [LARGE SCALE ANALYSIS] AT SER-497</scope>
    <scope>IDENTIFICATION BY MASS SPECTROMETRY [LARGE SCALE ANALYSIS]</scope>
    <source>
        <tissue>Embryonic brain</tissue>
    </source>
</reference>
<reference key="11">
    <citation type="journal article" date="2006" name="Mol. Cell. Proteomics">
        <title>Transgenic mouse proteomics identifies new 14-3-3-associated proteins involved in cytoskeletal rearrangements and cell signaling.</title>
        <authorList>
            <person name="Angrand P.O."/>
            <person name="Segura I."/>
            <person name="Voelkel P."/>
            <person name="Ghidelli S."/>
            <person name="Terry R."/>
            <person name="Brajenovic M."/>
            <person name="Vintersten K."/>
            <person name="Klein R."/>
            <person name="Superti-Furga G."/>
            <person name="Drewes G."/>
            <person name="Kuster B."/>
            <person name="Bouwmeester T."/>
            <person name="Acker-Palmer A."/>
        </authorList>
    </citation>
    <scope>INTERACTION WITH YWHAZ</scope>
</reference>
<reference key="12">
    <citation type="journal article" date="2007" name="Mol. Biol. Cell">
        <title>FAK potentiates Rac1 activation and localization to matrix adhesion sites: a role for betaPIX.</title>
        <authorList>
            <person name="Chang F."/>
            <person name="Lemmon C.A."/>
            <person name="Park D."/>
            <person name="Romer L.H."/>
        </authorList>
    </citation>
    <scope>FUNCTION</scope>
    <scope>PHOSPHORYLATION</scope>
    <scope>SUBCELLULAR LOCATION</scope>
    <scope>INTERACTION WITH PTK2/FAK1</scope>
</reference>
<reference key="13">
    <citation type="journal article" date="2007" name="Mol. Cell. Proteomics">
        <title>Qualitative and quantitative analyses of protein phosphorylation in naive and stimulated mouse synaptosomal preparations.</title>
        <authorList>
            <person name="Munton R.P."/>
            <person name="Tweedie-Cullen R."/>
            <person name="Livingstone-Zatchej M."/>
            <person name="Weinandy F."/>
            <person name="Waidelich M."/>
            <person name="Longo D."/>
            <person name="Gehrig P."/>
            <person name="Potthast F."/>
            <person name="Rutishauser D."/>
            <person name="Gerrits B."/>
            <person name="Panse C."/>
            <person name="Schlapbach R."/>
            <person name="Mansuy I.M."/>
        </authorList>
    </citation>
    <scope>IDENTIFICATION BY MASS SPECTROMETRY [LARGE SCALE ANALYSIS]</scope>
    <source>
        <tissue>Brain cortex</tissue>
    </source>
</reference>
<reference key="14">
    <citation type="journal article" date="2007" name="Proc. Natl. Acad. Sci. U.S.A.">
        <title>Large-scale phosphorylation analysis of mouse liver.</title>
        <authorList>
            <person name="Villen J."/>
            <person name="Beausoleil S.A."/>
            <person name="Gerber S.A."/>
            <person name="Gygi S.P."/>
        </authorList>
    </citation>
    <scope>PHOSPHORYLATION [LARGE SCALE ANALYSIS] AT SER-155 AND SER-497</scope>
    <scope>IDENTIFICATION BY MASS SPECTROMETRY [LARGE SCALE ANALYSIS]</scope>
    <source>
        <tissue>Liver</tissue>
    </source>
</reference>
<reference key="15">
    <citation type="journal article" date="2008" name="FEBS Lett.">
        <title>Affixin activates Rac1 via betaPIX in C2C12 myoblast.</title>
        <authorList>
            <person name="Matsuda C."/>
            <person name="Kameyama K."/>
            <person name="Suzuki A."/>
            <person name="Mishima W."/>
            <person name="Yamaji S."/>
            <person name="Okamoto H."/>
            <person name="Nishino I."/>
            <person name="Hayashi Y.K."/>
        </authorList>
    </citation>
    <scope>SUBCELLULAR LOCATION</scope>
    <scope>INTERACTION WITH PARVB</scope>
</reference>
<reference key="16">
    <citation type="journal article" date="2009" name="Immunity">
        <title>The phagosomal proteome in interferon-gamma-activated macrophages.</title>
        <authorList>
            <person name="Trost M."/>
            <person name="English L."/>
            <person name="Lemieux S."/>
            <person name="Courcelles M."/>
            <person name="Desjardins M."/>
            <person name="Thibault P."/>
        </authorList>
    </citation>
    <scope>PHOSPHORYLATION [LARGE SCALE ANALYSIS] AT SER-497 AND SER-673</scope>
    <scope>IDENTIFICATION BY MASS SPECTROMETRY [LARGE SCALE ANALYSIS]</scope>
</reference>
<reference key="17">
    <citation type="journal article" date="2010" name="Cell">
        <title>A tissue-specific atlas of mouse protein phosphorylation and expression.</title>
        <authorList>
            <person name="Huttlin E.L."/>
            <person name="Jedrychowski M.P."/>
            <person name="Elias J.E."/>
            <person name="Goswami T."/>
            <person name="Rad R."/>
            <person name="Beausoleil S.A."/>
            <person name="Villen J."/>
            <person name="Haas W."/>
            <person name="Sowa M.E."/>
            <person name="Gygi S.P."/>
        </authorList>
    </citation>
    <scope>PHOSPHORYLATION [LARGE SCALE ANALYSIS] AT SER-132; SER-155; SER-164; SER-497; SER-673 AND SER-776</scope>
    <scope>IDENTIFICATION BY MASS SPECTROMETRY [LARGE SCALE ANALYSIS]</scope>
    <source>
        <tissue>Brain</tissue>
        <tissue>Brown adipose tissue</tissue>
        <tissue>Heart</tissue>
        <tissue>Kidney</tissue>
        <tissue>Liver</tissue>
        <tissue>Lung</tissue>
        <tissue>Pancreas</tissue>
        <tissue>Spleen</tissue>
        <tissue>Testis</tissue>
    </source>
</reference>
<reference key="18">
    <citation type="journal article" date="2006" name="Biochem. Biophys. Res. Commun.">
        <title>Crystal structure of the N-terminal SH3 domain of mouse betaPIX, p21-activated kinase-interacting exchange factor.</title>
        <authorList>
            <person name="Li X."/>
            <person name="Liu X."/>
            <person name="Sun F."/>
            <person name="Gao J."/>
            <person name="Zhou H."/>
            <person name="Gao G.F."/>
            <person name="Bartlam M."/>
            <person name="Rao Z."/>
        </authorList>
    </citation>
    <scope>X-RAY CRYSTALLOGRAPHY (2.01 ANGSTROMS) OF 164-220</scope>
</reference>
<keyword id="KW-0002">3D-structure</keyword>
<keyword id="KW-0024">Alternative initiation</keyword>
<keyword id="KW-0025">Alternative splicing</keyword>
<keyword id="KW-0965">Cell junction</keyword>
<keyword id="KW-0966">Cell projection</keyword>
<keyword id="KW-0175">Coiled coil</keyword>
<keyword id="KW-0963">Cytoplasm</keyword>
<keyword id="KW-0344">Guanine-nucleotide releasing factor</keyword>
<keyword id="KW-0524">Neurogenesis</keyword>
<keyword id="KW-0597">Phosphoprotein</keyword>
<keyword id="KW-1185">Reference proteome</keyword>
<keyword id="KW-0728">SH3 domain</keyword>
<accession>Q9ES28</accession>
<accession>O08757</accession>
<accession>Q3UTS5</accession>
<accession>Q6XPA5</accession>
<accession>Q6ZQI5</accession>
<accession>Q8C750</accession>
<accession>Q91ZZ6</accession>
<accession>Q9ES27</accession>
<protein>
    <recommendedName>
        <fullName>Rho guanine nucleotide exchange factor 7</fullName>
    </recommendedName>
    <alternativeName>
        <fullName>Beta-Pix</fullName>
    </alternativeName>
    <alternativeName>
        <fullName>PAK-interacting exchange factor beta</fullName>
    </alternativeName>
    <alternativeName>
        <fullName>p85SPR</fullName>
    </alternativeName>
</protein>
<proteinExistence type="evidence at protein level"/>
<name>ARHG7_MOUSE</name>
<evidence type="ECO:0000250" key="1"/>
<evidence type="ECO:0000250" key="2">
    <source>
        <dbReference type="UniProtKB" id="Q14155"/>
    </source>
</evidence>
<evidence type="ECO:0000255" key="3"/>
<evidence type="ECO:0000255" key="4">
    <source>
        <dbReference type="PROSITE-ProRule" id="PRU00044"/>
    </source>
</evidence>
<evidence type="ECO:0000255" key="5">
    <source>
        <dbReference type="PROSITE-ProRule" id="PRU00062"/>
    </source>
</evidence>
<evidence type="ECO:0000255" key="6">
    <source>
        <dbReference type="PROSITE-ProRule" id="PRU00145"/>
    </source>
</evidence>
<evidence type="ECO:0000255" key="7">
    <source>
        <dbReference type="PROSITE-ProRule" id="PRU00192"/>
    </source>
</evidence>
<evidence type="ECO:0000256" key="8">
    <source>
        <dbReference type="SAM" id="MobiDB-lite"/>
    </source>
</evidence>
<evidence type="ECO:0000269" key="9">
    <source>
    </source>
</evidence>
<evidence type="ECO:0000269" key="10">
    <source>
    </source>
</evidence>
<evidence type="ECO:0000269" key="11">
    <source>
    </source>
</evidence>
<evidence type="ECO:0000269" key="12">
    <source>
    </source>
</evidence>
<evidence type="ECO:0000269" key="13">
    <source>
    </source>
</evidence>
<evidence type="ECO:0000269" key="14">
    <source>
    </source>
</evidence>
<evidence type="ECO:0000269" key="15">
    <source>
    </source>
</evidence>
<evidence type="ECO:0000303" key="16">
    <source>
    </source>
</evidence>
<evidence type="ECO:0000303" key="17">
    <source>
    </source>
</evidence>
<evidence type="ECO:0000303" key="18">
    <source>
    </source>
</evidence>
<evidence type="ECO:0000303" key="19">
    <source>
    </source>
</evidence>
<evidence type="ECO:0000303" key="20">
    <source>
    </source>
</evidence>
<evidence type="ECO:0000303" key="21">
    <source>
    </source>
</evidence>
<evidence type="ECO:0000303" key="22">
    <source>
    </source>
</evidence>
<evidence type="ECO:0000305" key="23"/>
<evidence type="ECO:0007744" key="24">
    <source>
    </source>
</evidence>
<evidence type="ECO:0007744" key="25">
    <source>
    </source>
</evidence>
<evidence type="ECO:0007744" key="26">
    <source>
    </source>
</evidence>
<evidence type="ECO:0007744" key="27">
    <source>
    </source>
</evidence>
<evidence type="ECO:0007829" key="28">
    <source>
        <dbReference type="PDB" id="2ESW"/>
    </source>
</evidence>
<evidence type="ECO:0007829" key="29">
    <source>
        <dbReference type="PDB" id="6JMT"/>
    </source>
</evidence>
<gene>
    <name type="primary">Arhgef7</name>
    <name type="synonym">Kiaa0142</name>
    <name type="synonym">Pak3bp</name>
</gene>
<dbReference type="EMBL" id="AK129064">
    <property type="protein sequence ID" value="BAC97874.1"/>
    <property type="status" value="ALT_INIT"/>
    <property type="molecule type" value="mRNA"/>
</dbReference>
<dbReference type="EMBL" id="AY220301">
    <property type="protein sequence ID" value="AAO65479.1"/>
    <property type="molecule type" value="mRNA"/>
</dbReference>
<dbReference type="EMBL" id="AK052545">
    <property type="protein sequence ID" value="BAC35033.1"/>
    <property type="status" value="ALT_INIT"/>
    <property type="molecule type" value="mRNA"/>
</dbReference>
<dbReference type="EMBL" id="AK139156">
    <property type="protein sequence ID" value="BAE23905.1"/>
    <property type="molecule type" value="mRNA"/>
</dbReference>
<dbReference type="EMBL" id="BC044838">
    <property type="protein sequence ID" value="AAH44838.1"/>
    <property type="status" value="ALT_INIT"/>
    <property type="molecule type" value="mRNA"/>
</dbReference>
<dbReference type="EMBL" id="AF247654">
    <property type="protein sequence ID" value="AAG18017.1"/>
    <property type="status" value="ALT_INIT"/>
    <property type="molecule type" value="mRNA"/>
</dbReference>
<dbReference type="EMBL" id="AF247655">
    <property type="protein sequence ID" value="AAG18018.1"/>
    <property type="status" value="ALT_INIT"/>
    <property type="molecule type" value="mRNA"/>
</dbReference>
<dbReference type="EMBL" id="AF343877">
    <property type="protein sequence ID" value="AAK97363.1"/>
    <property type="status" value="ALT_INIT"/>
    <property type="molecule type" value="mRNA"/>
</dbReference>
<dbReference type="EMBL" id="U96634">
    <property type="protein sequence ID" value="AAB57691.1"/>
    <property type="status" value="ALT_INIT"/>
    <property type="molecule type" value="mRNA"/>
</dbReference>
<dbReference type="CCDS" id="CCDS52480.1">
    <molecule id="Q9ES28-5"/>
</dbReference>
<dbReference type="CCDS" id="CCDS52481.1">
    <molecule id="Q9ES28-8"/>
</dbReference>
<dbReference type="RefSeq" id="NP_001106989.1">
    <molecule id="Q9ES28-5"/>
    <property type="nucleotide sequence ID" value="NM_001113517.2"/>
</dbReference>
<dbReference type="RefSeq" id="NP_001106990.1">
    <molecule id="Q9ES28-8"/>
    <property type="nucleotide sequence ID" value="NM_001113518.2"/>
</dbReference>
<dbReference type="RefSeq" id="NP_001359250.1">
    <molecule id="Q9ES28-1"/>
    <property type="nucleotide sequence ID" value="NM_001372321.1"/>
</dbReference>
<dbReference type="RefSeq" id="NP_001359251.1">
    <molecule id="Q9ES28-2"/>
    <property type="nucleotide sequence ID" value="NM_001372322.1"/>
</dbReference>
<dbReference type="RefSeq" id="NP_059098.2">
    <property type="nucleotide sequence ID" value="NM_017402.4"/>
</dbReference>
<dbReference type="RefSeq" id="XP_006508904.2">
    <property type="nucleotide sequence ID" value="XM_006508841.2"/>
</dbReference>
<dbReference type="RefSeq" id="XP_006508906.2">
    <property type="nucleotide sequence ID" value="XM_006508843.3"/>
</dbReference>
<dbReference type="RefSeq" id="XP_006508907.2">
    <property type="nucleotide sequence ID" value="XM_006508844.2"/>
</dbReference>
<dbReference type="PDB" id="2ESW">
    <property type="method" value="X-ray"/>
    <property type="resolution" value="2.01 A"/>
    <property type="chains" value="A/B=164-220"/>
</dbReference>
<dbReference type="PDB" id="6JMT">
    <property type="method" value="X-ray"/>
    <property type="resolution" value="2.80 A"/>
    <property type="chains" value="I/J/K/L/M/N=685-705"/>
</dbReference>
<dbReference type="PDBsum" id="2ESW"/>
<dbReference type="PDBsum" id="6JMT"/>
<dbReference type="BMRB" id="Q9ES28"/>
<dbReference type="SMR" id="Q9ES28"/>
<dbReference type="BioGRID" id="207566">
    <property type="interactions" value="57"/>
</dbReference>
<dbReference type="CORUM" id="Q9ES28"/>
<dbReference type="FunCoup" id="Q9ES28">
    <property type="interactions" value="2956"/>
</dbReference>
<dbReference type="IntAct" id="Q9ES28">
    <property type="interactions" value="24"/>
</dbReference>
<dbReference type="MINT" id="Q9ES28"/>
<dbReference type="STRING" id="10090.ENSMUSP00000106534"/>
<dbReference type="GlyGen" id="Q9ES28">
    <property type="glycosylation" value="4 sites, 2 N-linked glycans (2 sites), 1 O-linked glycan (2 sites)"/>
</dbReference>
<dbReference type="iPTMnet" id="Q9ES28"/>
<dbReference type="PhosphoSitePlus" id="Q9ES28"/>
<dbReference type="SwissPalm" id="Q9ES28"/>
<dbReference type="jPOST" id="Q9ES28"/>
<dbReference type="PaxDb" id="10090-ENSMUSP00000106534"/>
<dbReference type="PeptideAtlas" id="Q9ES28"/>
<dbReference type="ProteomicsDB" id="265083">
    <molecule id="Q9ES28-1"/>
</dbReference>
<dbReference type="ProteomicsDB" id="265084">
    <molecule id="Q9ES28-2"/>
</dbReference>
<dbReference type="ProteomicsDB" id="265085">
    <molecule id="Q9ES28-3"/>
</dbReference>
<dbReference type="ProteomicsDB" id="265086">
    <molecule id="Q9ES28-4"/>
</dbReference>
<dbReference type="ProteomicsDB" id="265087">
    <molecule id="Q9ES28-5"/>
</dbReference>
<dbReference type="ProteomicsDB" id="265088">
    <molecule id="Q9ES28-6"/>
</dbReference>
<dbReference type="ProteomicsDB" id="265089">
    <molecule id="Q9ES28-7"/>
</dbReference>
<dbReference type="ProteomicsDB" id="265090">
    <molecule id="Q9ES28-8"/>
</dbReference>
<dbReference type="Pumba" id="Q9ES28"/>
<dbReference type="Antibodypedia" id="1486">
    <property type="antibodies" value="298 antibodies from 33 providers"/>
</dbReference>
<dbReference type="DNASU" id="54126"/>
<dbReference type="Ensembl" id="ENSMUST00000098938.9">
    <molecule id="Q9ES28-8"/>
    <property type="protein sequence ID" value="ENSMUSP00000096538.3"/>
    <property type="gene ID" value="ENSMUSG00000031511.17"/>
</dbReference>
<dbReference type="Ensembl" id="ENSMUST00000110909.9">
    <molecule id="Q9ES28-5"/>
    <property type="protein sequence ID" value="ENSMUSP00000106534.3"/>
    <property type="gene ID" value="ENSMUSG00000031511.17"/>
</dbReference>
<dbReference type="GeneID" id="54126"/>
<dbReference type="KEGG" id="mmu:54126"/>
<dbReference type="UCSC" id="uc009kvu.2">
    <molecule id="Q9ES28-2"/>
    <property type="organism name" value="mouse"/>
</dbReference>
<dbReference type="UCSC" id="uc009kvv.2">
    <molecule id="Q9ES28-5"/>
    <property type="organism name" value="mouse"/>
</dbReference>
<dbReference type="UCSC" id="uc009kvw.2">
    <molecule id="Q9ES28-4"/>
    <property type="organism name" value="mouse"/>
</dbReference>
<dbReference type="UCSC" id="uc009kvx.2">
    <molecule id="Q9ES28-1"/>
    <property type="organism name" value="mouse"/>
</dbReference>
<dbReference type="AGR" id="MGI:1860493"/>
<dbReference type="CTD" id="8874"/>
<dbReference type="MGI" id="MGI:1860493">
    <property type="gene designation" value="Arhgef7"/>
</dbReference>
<dbReference type="VEuPathDB" id="HostDB:ENSMUSG00000031511"/>
<dbReference type="eggNOG" id="KOG2070">
    <property type="taxonomic scope" value="Eukaryota"/>
</dbReference>
<dbReference type="GeneTree" id="ENSGT00940000155360"/>
<dbReference type="InParanoid" id="Q9ES28"/>
<dbReference type="OMA" id="DILKCMA"/>
<dbReference type="PhylomeDB" id="Q9ES28"/>
<dbReference type="TreeFam" id="TF316105"/>
<dbReference type="Reactome" id="R-MMU-182971">
    <property type="pathway name" value="EGFR downregulation"/>
</dbReference>
<dbReference type="Reactome" id="R-MMU-193648">
    <property type="pathway name" value="NRAGE signals death through JNK"/>
</dbReference>
<dbReference type="Reactome" id="R-MMU-3928664">
    <property type="pathway name" value="Ephrin signaling"/>
</dbReference>
<dbReference type="Reactome" id="R-MMU-416482">
    <property type="pathway name" value="G alpha (12/13) signalling events"/>
</dbReference>
<dbReference type="Reactome" id="R-MMU-8980692">
    <property type="pathway name" value="RHOA GTPase cycle"/>
</dbReference>
<dbReference type="Reactome" id="R-MMU-9013149">
    <property type="pathway name" value="RAC1 GTPase cycle"/>
</dbReference>
<dbReference type="Reactome" id="R-MMU-9013406">
    <property type="pathway name" value="RHOQ GTPase cycle"/>
</dbReference>
<dbReference type="Reactome" id="R-MMU-9013420">
    <property type="pathway name" value="RHOU GTPase cycle"/>
</dbReference>
<dbReference type="Reactome" id="R-MMU-9013424">
    <property type="pathway name" value="RHOV GTPase cycle"/>
</dbReference>
<dbReference type="BioGRID-ORCS" id="54126">
    <property type="hits" value="21 hits in 78 CRISPR screens"/>
</dbReference>
<dbReference type="CD-CODE" id="D4281DD4">
    <property type="entry name" value="Synthetic Condensate 000311"/>
</dbReference>
<dbReference type="ChiTaRS" id="Arhgef7">
    <property type="organism name" value="mouse"/>
</dbReference>
<dbReference type="EvolutionaryTrace" id="Q9ES28"/>
<dbReference type="PRO" id="PR:Q9ES28"/>
<dbReference type="Proteomes" id="UP000000589">
    <property type="component" value="Chromosome 8"/>
</dbReference>
<dbReference type="RNAct" id="Q9ES28">
    <property type="molecule type" value="protein"/>
</dbReference>
<dbReference type="Bgee" id="ENSMUSG00000031511">
    <property type="expression patterns" value="Expressed in cortical plate and 265 other cell types or tissues"/>
</dbReference>
<dbReference type="ExpressionAtlas" id="Q9ES28">
    <property type="expression patterns" value="baseline and differential"/>
</dbReference>
<dbReference type="GO" id="GO:0005938">
    <property type="term" value="C:cell cortex"/>
    <property type="evidence" value="ECO:0007669"/>
    <property type="project" value="UniProtKB-SubCell"/>
</dbReference>
<dbReference type="GO" id="GO:0005813">
    <property type="term" value="C:centrosome"/>
    <property type="evidence" value="ECO:0000250"/>
    <property type="project" value="UniProtKB"/>
</dbReference>
<dbReference type="GO" id="GO:0005829">
    <property type="term" value="C:cytosol"/>
    <property type="evidence" value="ECO:0000314"/>
    <property type="project" value="MGI"/>
</dbReference>
<dbReference type="GO" id="GO:0005925">
    <property type="term" value="C:focal adhesion"/>
    <property type="evidence" value="ECO:0007669"/>
    <property type="project" value="UniProtKB-SubCell"/>
</dbReference>
<dbReference type="GO" id="GO:0030027">
    <property type="term" value="C:lamellipodium"/>
    <property type="evidence" value="ECO:0000314"/>
    <property type="project" value="UniProtKB"/>
</dbReference>
<dbReference type="GO" id="GO:0097431">
    <property type="term" value="C:mitotic spindle pole"/>
    <property type="evidence" value="ECO:0000250"/>
    <property type="project" value="UniProtKB"/>
</dbReference>
<dbReference type="GO" id="GO:0005886">
    <property type="term" value="C:plasma membrane"/>
    <property type="evidence" value="ECO:0000314"/>
    <property type="project" value="MGI"/>
</dbReference>
<dbReference type="GO" id="GO:0098794">
    <property type="term" value="C:postsynapse"/>
    <property type="evidence" value="ECO:0000314"/>
    <property type="project" value="UniProtKB"/>
</dbReference>
<dbReference type="GO" id="GO:0001726">
    <property type="term" value="C:ruffle"/>
    <property type="evidence" value="ECO:0007669"/>
    <property type="project" value="UniProtKB-SubCell"/>
</dbReference>
<dbReference type="GO" id="GO:0000322">
    <property type="term" value="C:storage vacuole"/>
    <property type="evidence" value="ECO:0000314"/>
    <property type="project" value="MGI"/>
</dbReference>
<dbReference type="GO" id="GO:0043015">
    <property type="term" value="F:gamma-tubulin binding"/>
    <property type="evidence" value="ECO:0000250"/>
    <property type="project" value="UniProtKB"/>
</dbReference>
<dbReference type="GO" id="GO:0005085">
    <property type="term" value="F:guanyl-nucleotide exchange factor activity"/>
    <property type="evidence" value="ECO:0000314"/>
    <property type="project" value="MGI"/>
</dbReference>
<dbReference type="GO" id="GO:0019901">
    <property type="term" value="F:protein kinase binding"/>
    <property type="evidence" value="ECO:0000353"/>
    <property type="project" value="BHF-UCL"/>
</dbReference>
<dbReference type="GO" id="GO:0002244">
    <property type="term" value="P:hematopoietic progenitor cell differentiation"/>
    <property type="evidence" value="ECO:0000316"/>
    <property type="project" value="MGI"/>
</dbReference>
<dbReference type="GO" id="GO:0035556">
    <property type="term" value="P:intracellular signal transduction"/>
    <property type="evidence" value="ECO:0007669"/>
    <property type="project" value="InterPro"/>
</dbReference>
<dbReference type="GO" id="GO:0030032">
    <property type="term" value="P:lamellipodium assembly"/>
    <property type="evidence" value="ECO:0000315"/>
    <property type="project" value="UniProtKB"/>
</dbReference>
<dbReference type="GO" id="GO:1905833">
    <property type="term" value="P:negative regulation of microtubule nucleation"/>
    <property type="evidence" value="ECO:0000250"/>
    <property type="project" value="UniProtKB"/>
</dbReference>
<dbReference type="GO" id="GO:0007399">
    <property type="term" value="P:nervous system development"/>
    <property type="evidence" value="ECO:0007669"/>
    <property type="project" value="UniProtKB-KW"/>
</dbReference>
<dbReference type="GO" id="GO:0043065">
    <property type="term" value="P:positive regulation of apoptotic process"/>
    <property type="evidence" value="ECO:0000250"/>
    <property type="project" value="UniProtKB"/>
</dbReference>
<dbReference type="GO" id="GO:0060124">
    <property type="term" value="P:positive regulation of growth hormone secretion"/>
    <property type="evidence" value="ECO:0000315"/>
    <property type="project" value="MGI"/>
</dbReference>
<dbReference type="GO" id="GO:0043547">
    <property type="term" value="P:positive regulation of GTPase activity"/>
    <property type="evidence" value="ECO:0007001"/>
    <property type="project" value="UniProtKB"/>
</dbReference>
<dbReference type="CDD" id="cd21266">
    <property type="entry name" value="CH_betaPIX"/>
    <property type="match status" value="1"/>
</dbReference>
<dbReference type="CDD" id="cd01225">
    <property type="entry name" value="PH_Cool_Pix"/>
    <property type="match status" value="1"/>
</dbReference>
<dbReference type="CDD" id="cd00160">
    <property type="entry name" value="RhoGEF"/>
    <property type="match status" value="1"/>
</dbReference>
<dbReference type="CDD" id="cd12061">
    <property type="entry name" value="SH3_betaPIX"/>
    <property type="match status" value="1"/>
</dbReference>
<dbReference type="FunFam" id="2.30.30.40:FF:000034">
    <property type="entry name" value="Rho guanine nucleotide exchange factor (GEF) 7"/>
    <property type="match status" value="1"/>
</dbReference>
<dbReference type="FunFam" id="1.20.900.10:FF:000016">
    <property type="entry name" value="Rho guanine nucleotide exchange factor 6"/>
    <property type="match status" value="1"/>
</dbReference>
<dbReference type="FunFam" id="2.30.29.30:FF:000094">
    <property type="entry name" value="Rho guanine nucleotide exchange factor 7"/>
    <property type="match status" value="1"/>
</dbReference>
<dbReference type="FunFam" id="1.10.418.10:FF:000049">
    <property type="entry name" value="Rho guanine nucleotide exchange factor 7 isoform X1"/>
    <property type="match status" value="1"/>
</dbReference>
<dbReference type="FunFam" id="1.20.5.390:FF:000001">
    <property type="entry name" value="rho guanine nucleotide exchange factor 7 isoform X1"/>
    <property type="match status" value="1"/>
</dbReference>
<dbReference type="Gene3D" id="1.10.418.10">
    <property type="entry name" value="Calponin-like domain"/>
    <property type="match status" value="1"/>
</dbReference>
<dbReference type="Gene3D" id="1.20.900.10">
    <property type="entry name" value="Dbl homology (DH) domain"/>
    <property type="match status" value="1"/>
</dbReference>
<dbReference type="Gene3D" id="1.20.5.390">
    <property type="entry name" value="L1 transposable element, trimerization domain"/>
    <property type="match status" value="1"/>
</dbReference>
<dbReference type="Gene3D" id="2.30.29.30">
    <property type="entry name" value="Pleckstrin-homology domain (PH domain)/Phosphotyrosine-binding domain (PTB)"/>
    <property type="match status" value="1"/>
</dbReference>
<dbReference type="Gene3D" id="2.30.30.40">
    <property type="entry name" value="SH3 Domains"/>
    <property type="match status" value="1"/>
</dbReference>
<dbReference type="InterPro" id="IPR035789">
    <property type="entry name" value="BetaPIX_SH3"/>
</dbReference>
<dbReference type="InterPro" id="IPR001715">
    <property type="entry name" value="CH_dom"/>
</dbReference>
<dbReference type="InterPro" id="IPR036872">
    <property type="entry name" value="CH_dom_sf"/>
</dbReference>
<dbReference type="InterPro" id="IPR035899">
    <property type="entry name" value="DBL_dom_sf"/>
</dbReference>
<dbReference type="InterPro" id="IPR000219">
    <property type="entry name" value="DH_dom"/>
</dbReference>
<dbReference type="InterPro" id="IPR001331">
    <property type="entry name" value="GDS_CDC24_CS"/>
</dbReference>
<dbReference type="InterPro" id="IPR032409">
    <property type="entry name" value="GEF6/7_CC"/>
</dbReference>
<dbReference type="InterPro" id="IPR011993">
    <property type="entry name" value="PH-like_dom_sf"/>
</dbReference>
<dbReference type="InterPro" id="IPR046376">
    <property type="entry name" value="PH_Cool_Pix"/>
</dbReference>
<dbReference type="InterPro" id="IPR001849">
    <property type="entry name" value="PH_domain"/>
</dbReference>
<dbReference type="InterPro" id="IPR036028">
    <property type="entry name" value="SH3-like_dom_sf"/>
</dbReference>
<dbReference type="InterPro" id="IPR001452">
    <property type="entry name" value="SH3_domain"/>
</dbReference>
<dbReference type="PANTHER" id="PTHR46026:SF3">
    <property type="entry name" value="RHO GUANINE NUCLEOTIDE EXCHANGE FACTOR 7"/>
    <property type="match status" value="1"/>
</dbReference>
<dbReference type="PANTHER" id="PTHR46026">
    <property type="entry name" value="RHO-TYPE GUANINE NUCLEOTIDE EXCHANGE FACTOR, ISOFORM F"/>
    <property type="match status" value="1"/>
</dbReference>
<dbReference type="Pfam" id="PF16523">
    <property type="entry name" value="betaPIX_CC"/>
    <property type="match status" value="1"/>
</dbReference>
<dbReference type="Pfam" id="PF00307">
    <property type="entry name" value="CH"/>
    <property type="match status" value="1"/>
</dbReference>
<dbReference type="Pfam" id="PF00169">
    <property type="entry name" value="PH"/>
    <property type="match status" value="1"/>
</dbReference>
<dbReference type="Pfam" id="PF00621">
    <property type="entry name" value="RhoGEF"/>
    <property type="match status" value="1"/>
</dbReference>
<dbReference type="Pfam" id="PF16615">
    <property type="entry name" value="RhoGEF67_u1"/>
    <property type="match status" value="1"/>
</dbReference>
<dbReference type="Pfam" id="PF16614">
    <property type="entry name" value="RhoGEF67_u2"/>
    <property type="match status" value="1"/>
</dbReference>
<dbReference type="Pfam" id="PF07653">
    <property type="entry name" value="SH3_2"/>
    <property type="match status" value="1"/>
</dbReference>
<dbReference type="PRINTS" id="PR00452">
    <property type="entry name" value="SH3DOMAIN"/>
</dbReference>
<dbReference type="SMART" id="SM00033">
    <property type="entry name" value="CH"/>
    <property type="match status" value="1"/>
</dbReference>
<dbReference type="SMART" id="SM00233">
    <property type="entry name" value="PH"/>
    <property type="match status" value="1"/>
</dbReference>
<dbReference type="SMART" id="SM00325">
    <property type="entry name" value="RhoGEF"/>
    <property type="match status" value="1"/>
</dbReference>
<dbReference type="SMART" id="SM00326">
    <property type="entry name" value="SH3"/>
    <property type="match status" value="1"/>
</dbReference>
<dbReference type="SUPFAM" id="SSF47576">
    <property type="entry name" value="Calponin-homology domain, CH-domain"/>
    <property type="match status" value="1"/>
</dbReference>
<dbReference type="SUPFAM" id="SSF48065">
    <property type="entry name" value="DBL homology domain (DH-domain)"/>
    <property type="match status" value="1"/>
</dbReference>
<dbReference type="SUPFAM" id="SSF50729">
    <property type="entry name" value="PH domain-like"/>
    <property type="match status" value="1"/>
</dbReference>
<dbReference type="SUPFAM" id="SSF50044">
    <property type="entry name" value="SH3-domain"/>
    <property type="match status" value="1"/>
</dbReference>
<dbReference type="PROSITE" id="PS50021">
    <property type="entry name" value="CH"/>
    <property type="match status" value="1"/>
</dbReference>
<dbReference type="PROSITE" id="PS00741">
    <property type="entry name" value="DH_1"/>
    <property type="match status" value="1"/>
</dbReference>
<dbReference type="PROSITE" id="PS50010">
    <property type="entry name" value="DH_2"/>
    <property type="match status" value="1"/>
</dbReference>
<dbReference type="PROSITE" id="PS50003">
    <property type="entry name" value="PH_DOMAIN"/>
    <property type="match status" value="1"/>
</dbReference>
<dbReference type="PROSITE" id="PS50002">
    <property type="entry name" value="SH3"/>
    <property type="match status" value="1"/>
</dbReference>
<feature type="chain" id="PRO_0000080922" description="Rho guanine nucleotide exchange factor 7">
    <location>
        <begin position="1"/>
        <end position="862"/>
    </location>
</feature>
<feature type="domain" description="Calponin-homology (CH)" evidence="4">
    <location>
        <begin position="1"/>
        <end position="112"/>
    </location>
</feature>
<feature type="domain" description="SH3" evidence="7">
    <location>
        <begin position="163"/>
        <end position="222"/>
    </location>
</feature>
<feature type="domain" description="DH" evidence="5">
    <location>
        <begin position="250"/>
        <end position="430"/>
    </location>
</feature>
<feature type="domain" description="PH" evidence="6">
    <location>
        <begin position="452"/>
        <end position="557"/>
    </location>
</feature>
<feature type="region of interest" description="Disordered" evidence="8">
    <location>
        <begin position="559"/>
        <end position="591"/>
    </location>
</feature>
<feature type="region of interest" description="Disordered" evidence="8">
    <location>
        <begin position="657"/>
        <end position="679"/>
    </location>
</feature>
<feature type="region of interest" description="Disordered" evidence="8">
    <location>
        <begin position="728"/>
        <end position="748"/>
    </location>
</feature>
<feature type="coiled-coil region" evidence="3">
    <location>
        <begin position="804"/>
        <end position="854"/>
    </location>
</feature>
<feature type="compositionally biased region" description="Polar residues" evidence="8">
    <location>
        <begin position="572"/>
        <end position="585"/>
    </location>
</feature>
<feature type="compositionally biased region" description="Basic residues" evidence="8">
    <location>
        <begin position="657"/>
        <end position="669"/>
    </location>
</feature>
<feature type="compositionally biased region" description="Basic and acidic residues" evidence="8">
    <location>
        <begin position="670"/>
        <end position="679"/>
    </location>
</feature>
<feature type="compositionally biased region" description="Low complexity" evidence="8">
    <location>
        <begin position="731"/>
        <end position="744"/>
    </location>
</feature>
<feature type="modified residue" description="Phosphoserine" evidence="27">
    <location>
        <position position="132"/>
    </location>
</feature>
<feature type="modified residue" description="Phosphoserine" evidence="25 27">
    <location>
        <position position="155"/>
    </location>
</feature>
<feature type="modified residue" description="Phosphoserine" evidence="27">
    <location>
        <position position="164"/>
    </location>
</feature>
<feature type="modified residue" description="Phosphoserine" evidence="2">
    <location>
        <position position="228"/>
    </location>
</feature>
<feature type="modified residue" description="Phosphoserine" evidence="2">
    <location>
        <position position="236"/>
    </location>
</feature>
<feature type="modified residue" description="Phosphoserine" evidence="24 25 26 27">
    <location>
        <position position="497"/>
    </location>
</feature>
<feature type="modified residue" description="Phosphoserine" evidence="26 27">
    <location>
        <position position="673"/>
    </location>
</feature>
<feature type="modified residue" description="Phosphoserine" evidence="27">
    <location>
        <position position="776"/>
    </location>
</feature>
<feature type="splice variant" id="VSP_023051" description="In isoform H." evidence="16 19">
    <location>
        <begin position="1"/>
        <end position="157"/>
    </location>
</feature>
<feature type="splice variant" id="VSP_023052" description="In isoform D, isoform F and isoform G." evidence="19 20 21">
    <location>
        <begin position="1"/>
        <end position="52"/>
    </location>
</feature>
<feature type="splice variant" id="VSP_023053" description="In isoform D, isoform F and isoform G." evidence="19 20 21">
    <original>IEK</original>
    <variation>MLQ</variation>
    <location>
        <begin position="53"/>
        <end position="55"/>
    </location>
</feature>
<feature type="splice variant" id="VSP_001816" description="In isoform C." evidence="16">
    <location>
        <begin position="576"/>
        <end position="650"/>
    </location>
</feature>
<feature type="splice variant" id="VSP_023054" description="In isoform F." evidence="21">
    <original>TWQGTDLMHNHVLADDDQSSLDSLGRRSSLSRLEPSDLSEDSEYDSIWTAHSYRMGSASRSRKESAPQVLLPEEEKIIVEETKSNGQTVIEEKSLVDTVYALKDEVQEL</original>
    <variation>SECRSSPRVGTDYKQLLHGLAALEREVSGA</variation>
    <location>
        <begin position="712"/>
        <end position="820"/>
    </location>
</feature>
<feature type="splice variant" id="VSP_001817" description="In isoform A and isoform D." evidence="20 21 22">
    <original>TWQGTDLMHNHVLADDDQSSLDSLGRRSSLSRLEPSDLSEDSEYDSIWTAHSYRMGSASR</original>
    <variation>S</variation>
    <location>
        <begin position="712"/>
        <end position="771"/>
    </location>
</feature>
<feature type="splice variant" id="VSP_023055" description="In isoform E." evidence="17 18 20 21">
    <original>SRKESAPQVLLPEEEKIIVEETKSNGQTVIEEKSLVDTVYALKDEVQELRQDN</original>
    <variation>KSCCSYISHQN</variation>
    <location>
        <begin position="772"/>
        <end position="824"/>
    </location>
</feature>
<feature type="splice variant" id="VSP_023056" description="In isoform F." evidence="21">
    <location>
        <begin position="821"/>
        <end position="862"/>
    </location>
</feature>
<feature type="splice variant" id="VSP_023057" description="In isoform E." evidence="17 18 20 21">
    <location>
        <begin position="825"/>
        <end position="862"/>
    </location>
</feature>
<feature type="sequence conflict" description="In Ref. 2; AAO65479, 5; AAG18017/AAG18018 and 7; AAB57691." evidence="23" ref="2 5 7">
    <original>NLLL</original>
    <variation>KPSV</variation>
    <location>
        <begin position="485"/>
        <end position="488"/>
    </location>
</feature>
<feature type="sequence conflict" description="In Ref. 2; AAO65479, 5; AAG18017/AAG18018 and 7; AAB57691." evidence="23" ref="2 5 7">
    <original>A</original>
    <variation>P</variation>
    <location>
        <position position="492"/>
    </location>
</feature>
<feature type="sequence conflict" description="In Ref. 2; AAO65479, 5; AAG18017 and 7; AAB57691." evidence="23" ref="2 5 7">
    <original>S</original>
    <variation>R</variation>
    <location>
        <position position="616"/>
    </location>
</feature>
<feature type="sequence conflict" description="In Ref. 7; AAB57691." evidence="23" ref="7">
    <original>KT</original>
    <variation>PH</variation>
    <location>
        <begin position="624"/>
        <end position="625"/>
    </location>
</feature>
<feature type="sequence conflict" description="In Ref. 2; AAO65479 and 7; AAB57691." evidence="23" ref="2 7">
    <original>P</original>
    <variation>A</variation>
    <location>
        <position position="628"/>
    </location>
</feature>
<feature type="sequence conflict" description="In Ref. 7; AAB57691." evidence="23" ref="7">
    <original>S</original>
    <variation>G</variation>
    <location>
        <position position="630"/>
    </location>
</feature>
<feature type="sequence conflict" description="In Ref. 2; AAO65479, 5; AAG18017 and 7; AAB57691." evidence="23" ref="2 5 7">
    <original>C</original>
    <variation>W</variation>
    <location>
        <position position="633"/>
    </location>
</feature>
<feature type="sequence conflict" description="In Ref. 7; AAB57691." evidence="23" ref="7">
    <original>RP</original>
    <variation>WT</variation>
    <location>
        <begin position="635"/>
        <end position="636"/>
    </location>
</feature>
<feature type="strand" evidence="28">
    <location>
        <begin position="167"/>
        <end position="172"/>
    </location>
</feature>
<feature type="strand" evidence="28">
    <location>
        <begin position="189"/>
        <end position="195"/>
    </location>
</feature>
<feature type="strand" evidence="28">
    <location>
        <begin position="199"/>
        <end position="205"/>
    </location>
</feature>
<feature type="strand" evidence="28">
    <location>
        <begin position="208"/>
        <end position="213"/>
    </location>
</feature>
<feature type="helix" evidence="28">
    <location>
        <begin position="214"/>
        <end position="216"/>
    </location>
</feature>
<feature type="strand" evidence="28">
    <location>
        <begin position="217"/>
        <end position="219"/>
    </location>
</feature>
<feature type="helix" evidence="29">
    <location>
        <begin position="686"/>
        <end position="698"/>
    </location>
</feature>
<organism>
    <name type="scientific">Mus musculus</name>
    <name type="common">Mouse</name>
    <dbReference type="NCBI Taxonomy" id="10090"/>
    <lineage>
        <taxon>Eukaryota</taxon>
        <taxon>Metazoa</taxon>
        <taxon>Chordata</taxon>
        <taxon>Craniata</taxon>
        <taxon>Vertebrata</taxon>
        <taxon>Euteleostomi</taxon>
        <taxon>Mammalia</taxon>
        <taxon>Eutheria</taxon>
        <taxon>Euarchontoglires</taxon>
        <taxon>Glires</taxon>
        <taxon>Rodentia</taxon>
        <taxon>Myomorpha</taxon>
        <taxon>Muroidea</taxon>
        <taxon>Muridae</taxon>
        <taxon>Murinae</taxon>
        <taxon>Mus</taxon>
        <taxon>Mus</taxon>
    </lineage>
</organism>
<sequence length="862" mass="97056">MNSAEQTVTWLITLGVLESPKKTISDPEVFLQASLKDGVVLCRLLERLLPGTIEKVYPEPRNESECLSNIREFLRACGASLRLETFDANDLYQGQNFNKVLSSLVTLNKVTADIGLGSDSVCARPSSHRIKSFDSLGSQSSHSRTSKLLQSQYRSLDMTDNTNSQLVVRAKFNFQQTNEDELSFSKGDVIHVTRVEEGGWWEGTHNGRTGWFPSNYVREIKPSEKPVSPKSGTLKSPPKGFDTTAINKSYYNVVLQNILETEHEYSKELQSVLSTYLRPLQTSDKLSSANTSYLMGNLEEISSFQQVLVQSLEECTKSPEAQQRVGGCFLSLMPQMRTLYLAYCANHPSAVSVLTEHSEDLGEFMETKGASSPGILVLTTGLSKPFMRLDKYPTLLKELERHMEDYHPDRQDIQKSMTAFKNLSAQCQEVRKRKELELQILTEPIRSWEGDDIKTLGSVTYMSQVTIQCAGSEEKNERYLLLFPNLLLMLSASPRMSGFIYQGKLPTTGMTITKLEDSENHRNAFEISGSMIERILVSCTSQQDLHEWVEHLQKQTKVTSVSNPTIKPHSVPSHTLPSHPLTPSSKHADSKPVALTPAYHTLPHPSHHGTPHTTISWGPLEPPKTPKPWSLSCLRPAPPLRPSAALCYKEDLSKSPKTMKKLLPKRKPERKPSDEEFAVRKSTAALEEDAQILKVIEAYCTSAKTRQTLNSTWQGTDLMHNHVLADDDQSSLDSLGRRSSLSRLEPSDLSEDSEYDSIWTAHSYRMGSASRSRKESAPQVLLPEEEKIIVEETKSNGQTVIEEKSLVDTVYALKDEVQELRQDNKKMKKSLEEEQRARKDLEKLVRKVLKNMNDPAWDETNL</sequence>